<evidence type="ECO:0000250" key="1">
    <source>
        <dbReference type="UniProtKB" id="Q7YWX9"/>
    </source>
</evidence>
<evidence type="ECO:0000255" key="2"/>
<evidence type="ECO:0000256" key="3">
    <source>
        <dbReference type="SAM" id="MobiDB-lite"/>
    </source>
</evidence>
<evidence type="ECO:0000305" key="4"/>
<evidence type="ECO:0000312" key="5">
    <source>
        <dbReference type="EMBL" id="CAP37786.1"/>
    </source>
</evidence>
<protein>
    <recommendedName>
        <fullName>Chondroitin proteoglycan 7</fullName>
    </recommendedName>
</protein>
<proteinExistence type="inferred from homology"/>
<organism>
    <name type="scientific">Caenorhabditis briggsae</name>
    <dbReference type="NCBI Taxonomy" id="6238"/>
    <lineage>
        <taxon>Eukaryota</taxon>
        <taxon>Metazoa</taxon>
        <taxon>Ecdysozoa</taxon>
        <taxon>Nematoda</taxon>
        <taxon>Chromadorea</taxon>
        <taxon>Rhabditida</taxon>
        <taxon>Rhabditina</taxon>
        <taxon>Rhabditomorpha</taxon>
        <taxon>Rhabditoidea</taxon>
        <taxon>Rhabditidae</taxon>
        <taxon>Peloderinae</taxon>
        <taxon>Caenorhabditis</taxon>
    </lineage>
</organism>
<sequence>MQTITLLALLACIAVPIFADFDHLRARRDVVEASGEGSGESSGEKIVESSGEGSGESSGDKIVEASGEGSGEGSGASDAVLESSGEGSGENLSNGIVASDAPKDVKALTASEFAVSV</sequence>
<feature type="signal peptide" evidence="2">
    <location>
        <begin position="1"/>
        <end position="19"/>
    </location>
</feature>
<feature type="chain" id="PRO_0000320225" description="Chondroitin proteoglycan 7">
    <location>
        <begin position="20"/>
        <end position="117"/>
    </location>
</feature>
<feature type="region of interest" description="Disordered" evidence="3">
    <location>
        <begin position="31"/>
        <end position="97"/>
    </location>
</feature>
<feature type="compositionally biased region" description="Low complexity" evidence="3">
    <location>
        <begin position="32"/>
        <end position="41"/>
    </location>
</feature>
<feature type="compositionally biased region" description="Low complexity" evidence="3">
    <location>
        <begin position="48"/>
        <end position="57"/>
    </location>
</feature>
<feature type="compositionally biased region" description="Low complexity" evidence="3">
    <location>
        <begin position="75"/>
        <end position="95"/>
    </location>
</feature>
<feature type="glycosylation site" description="O-linked (Xyl...) (chondroitin sulfate) serine" evidence="1">
    <location>
        <position position="66"/>
    </location>
</feature>
<feature type="glycosylation site" description="O-linked (Xyl...) (chondroitin sulfate) serine" evidence="1">
    <location>
        <position position="70"/>
    </location>
</feature>
<feature type="glycosylation site" description="O-linked (Xyl...) (chondroitin sulfate) serine" evidence="1">
    <location>
        <position position="74"/>
    </location>
</feature>
<feature type="glycosylation site" description="O-linked (Xyl...) (chondroitin sulfate) serine" evidence="1">
    <location>
        <position position="84"/>
    </location>
</feature>
<feature type="glycosylation site" description="O-linked (Xyl...) (chondroitin sulfate) serine" evidence="1">
    <location>
        <position position="88"/>
    </location>
</feature>
<feature type="glycosylation site" description="N-linked (GlcNAc...) asparagine" evidence="2">
    <location>
        <position position="91"/>
    </location>
</feature>
<name>CPG7_CAEBR</name>
<gene>
    <name type="primary">cpg-7</name>
    <name type="ORF">CBG20845</name>
</gene>
<reference evidence="4 5" key="1">
    <citation type="journal article" date="2003" name="PLoS Biol.">
        <title>The genome sequence of Caenorhabditis briggsae: a platform for comparative genomics.</title>
        <authorList>
            <person name="Stein L.D."/>
            <person name="Bao Z."/>
            <person name="Blasiar D."/>
            <person name="Blumenthal T."/>
            <person name="Brent M.R."/>
            <person name="Chen N."/>
            <person name="Chinwalla A."/>
            <person name="Clarke L."/>
            <person name="Clee C."/>
            <person name="Coghlan A."/>
            <person name="Coulson A."/>
            <person name="D'Eustachio P."/>
            <person name="Fitch D.H.A."/>
            <person name="Fulton L.A."/>
            <person name="Fulton R.E."/>
            <person name="Griffiths-Jones S."/>
            <person name="Harris T.W."/>
            <person name="Hillier L.W."/>
            <person name="Kamath R."/>
            <person name="Kuwabara P.E."/>
            <person name="Mardis E.R."/>
            <person name="Marra M.A."/>
            <person name="Miner T.L."/>
            <person name="Minx P."/>
            <person name="Mullikin J.C."/>
            <person name="Plumb R.W."/>
            <person name="Rogers J."/>
            <person name="Schein J.E."/>
            <person name="Sohrmann M."/>
            <person name="Spieth J."/>
            <person name="Stajich J.E."/>
            <person name="Wei C."/>
            <person name="Willey D."/>
            <person name="Wilson R.K."/>
            <person name="Durbin R.M."/>
            <person name="Waterston R.H."/>
        </authorList>
    </citation>
    <scope>NUCLEOTIDE SEQUENCE [LARGE SCALE GENOMIC DNA]</scope>
    <source>
        <strain evidence="5">AF16</strain>
    </source>
</reference>
<accession>A8XYS0</accession>
<dbReference type="EMBL" id="HE600928">
    <property type="protein sequence ID" value="CAP37786.1"/>
    <property type="molecule type" value="Genomic_DNA"/>
</dbReference>
<dbReference type="SMR" id="A8XYS0"/>
<dbReference type="FunCoup" id="A8XYS0">
    <property type="interactions" value="1376"/>
</dbReference>
<dbReference type="STRING" id="6238.A8XYS0"/>
<dbReference type="GlyCosmos" id="A8XYS0">
    <property type="glycosylation" value="6 sites, No reported glycans"/>
</dbReference>
<dbReference type="EnsemblMetazoa" id="CBG20845.1">
    <property type="protein sequence ID" value="CBG20845.1"/>
    <property type="gene ID" value="WBGene00039757"/>
</dbReference>
<dbReference type="KEGG" id="cbr:CBG_20845"/>
<dbReference type="CTD" id="8573652"/>
<dbReference type="WormBase" id="CBG20845">
    <property type="protein sequence ID" value="CBP24101"/>
    <property type="gene ID" value="WBGene00039757"/>
    <property type="gene designation" value="Cbr-cpg-7"/>
</dbReference>
<dbReference type="eggNOG" id="ENOG502TEKE">
    <property type="taxonomic scope" value="Eukaryota"/>
</dbReference>
<dbReference type="HOGENOM" id="CLU_2099053_0_0_1"/>
<dbReference type="InParanoid" id="A8XYS0"/>
<dbReference type="OMA" id="SWQWTES"/>
<dbReference type="Proteomes" id="UP000008549">
    <property type="component" value="Unassembled WGS sequence"/>
</dbReference>
<keyword id="KW-0325">Glycoprotein</keyword>
<keyword id="KW-0654">Proteoglycan</keyword>
<keyword id="KW-1185">Reference proteome</keyword>
<keyword id="KW-0732">Signal</keyword>